<feature type="chain" id="PRO_1000141723" description="DNA-directed RNA polymerase subunit beta">
    <location>
        <begin position="1"/>
        <end position="1357"/>
    </location>
</feature>
<dbReference type="EC" id="2.7.7.6" evidence="1"/>
<dbReference type="EMBL" id="CP000949">
    <property type="protein sequence ID" value="ACA75232.1"/>
    <property type="molecule type" value="Genomic_DNA"/>
</dbReference>
<dbReference type="SMR" id="B1JDX1"/>
<dbReference type="STRING" id="390235.PputW619_4756"/>
<dbReference type="KEGG" id="ppw:PputW619_4756"/>
<dbReference type="eggNOG" id="COG0085">
    <property type="taxonomic scope" value="Bacteria"/>
</dbReference>
<dbReference type="HOGENOM" id="CLU_000524_4_0_6"/>
<dbReference type="OrthoDB" id="9803954at2"/>
<dbReference type="GO" id="GO:0000428">
    <property type="term" value="C:DNA-directed RNA polymerase complex"/>
    <property type="evidence" value="ECO:0007669"/>
    <property type="project" value="UniProtKB-KW"/>
</dbReference>
<dbReference type="GO" id="GO:0003677">
    <property type="term" value="F:DNA binding"/>
    <property type="evidence" value="ECO:0007669"/>
    <property type="project" value="UniProtKB-UniRule"/>
</dbReference>
<dbReference type="GO" id="GO:0003899">
    <property type="term" value="F:DNA-directed RNA polymerase activity"/>
    <property type="evidence" value="ECO:0007669"/>
    <property type="project" value="UniProtKB-UniRule"/>
</dbReference>
<dbReference type="GO" id="GO:0032549">
    <property type="term" value="F:ribonucleoside binding"/>
    <property type="evidence" value="ECO:0007669"/>
    <property type="project" value="InterPro"/>
</dbReference>
<dbReference type="GO" id="GO:0006351">
    <property type="term" value="P:DNA-templated transcription"/>
    <property type="evidence" value="ECO:0007669"/>
    <property type="project" value="UniProtKB-UniRule"/>
</dbReference>
<dbReference type="CDD" id="cd00653">
    <property type="entry name" value="RNA_pol_B_RPB2"/>
    <property type="match status" value="1"/>
</dbReference>
<dbReference type="FunFam" id="2.40.50.100:FF:000006">
    <property type="entry name" value="DNA-directed RNA polymerase subunit beta"/>
    <property type="match status" value="1"/>
</dbReference>
<dbReference type="FunFam" id="2.40.50.150:FF:000001">
    <property type="entry name" value="DNA-directed RNA polymerase subunit beta"/>
    <property type="match status" value="1"/>
</dbReference>
<dbReference type="FunFam" id="3.90.1110.10:FF:000001">
    <property type="entry name" value="DNA-directed RNA polymerase subunit beta"/>
    <property type="match status" value="1"/>
</dbReference>
<dbReference type="FunFam" id="3.90.1110.10:FF:000004">
    <property type="entry name" value="DNA-directed RNA polymerase subunit beta"/>
    <property type="match status" value="1"/>
</dbReference>
<dbReference type="FunFam" id="3.90.1800.10:FF:000001">
    <property type="entry name" value="DNA-directed RNA polymerase subunit beta"/>
    <property type="match status" value="1"/>
</dbReference>
<dbReference type="Gene3D" id="2.40.50.100">
    <property type="match status" value="1"/>
</dbReference>
<dbReference type="Gene3D" id="2.40.50.150">
    <property type="match status" value="1"/>
</dbReference>
<dbReference type="Gene3D" id="3.90.1100.10">
    <property type="match status" value="2"/>
</dbReference>
<dbReference type="Gene3D" id="2.30.150.10">
    <property type="entry name" value="DNA-directed RNA polymerase, beta subunit, external 1 domain"/>
    <property type="match status" value="1"/>
</dbReference>
<dbReference type="Gene3D" id="2.40.270.10">
    <property type="entry name" value="DNA-directed RNA polymerase, subunit 2, domain 6"/>
    <property type="match status" value="1"/>
</dbReference>
<dbReference type="Gene3D" id="3.90.1800.10">
    <property type="entry name" value="RNA polymerase alpha subunit dimerisation domain"/>
    <property type="match status" value="1"/>
</dbReference>
<dbReference type="Gene3D" id="3.90.1110.10">
    <property type="entry name" value="RNA polymerase Rpb2, domain 2"/>
    <property type="match status" value="1"/>
</dbReference>
<dbReference type="HAMAP" id="MF_01321">
    <property type="entry name" value="RNApol_bact_RpoB"/>
    <property type="match status" value="1"/>
</dbReference>
<dbReference type="InterPro" id="IPR042107">
    <property type="entry name" value="DNA-dir_RNA_pol_bsu_ext_1_sf"/>
</dbReference>
<dbReference type="InterPro" id="IPR019462">
    <property type="entry name" value="DNA-dir_RNA_pol_bsu_external_1"/>
</dbReference>
<dbReference type="InterPro" id="IPR015712">
    <property type="entry name" value="DNA-dir_RNA_pol_su2"/>
</dbReference>
<dbReference type="InterPro" id="IPR007120">
    <property type="entry name" value="DNA-dir_RNAP_su2_dom"/>
</dbReference>
<dbReference type="InterPro" id="IPR037033">
    <property type="entry name" value="DNA-dir_RNAP_su2_hyb_sf"/>
</dbReference>
<dbReference type="InterPro" id="IPR010243">
    <property type="entry name" value="RNA_pol_bsu_bac"/>
</dbReference>
<dbReference type="InterPro" id="IPR007121">
    <property type="entry name" value="RNA_pol_bsu_CS"/>
</dbReference>
<dbReference type="InterPro" id="IPR007644">
    <property type="entry name" value="RNA_pol_bsu_protrusion"/>
</dbReference>
<dbReference type="InterPro" id="IPR007642">
    <property type="entry name" value="RNA_pol_Rpb2_2"/>
</dbReference>
<dbReference type="InterPro" id="IPR037034">
    <property type="entry name" value="RNA_pol_Rpb2_2_sf"/>
</dbReference>
<dbReference type="InterPro" id="IPR007645">
    <property type="entry name" value="RNA_pol_Rpb2_3"/>
</dbReference>
<dbReference type="InterPro" id="IPR007641">
    <property type="entry name" value="RNA_pol_Rpb2_7"/>
</dbReference>
<dbReference type="InterPro" id="IPR014724">
    <property type="entry name" value="RNA_pol_RPB2_OB-fold"/>
</dbReference>
<dbReference type="NCBIfam" id="NF001616">
    <property type="entry name" value="PRK00405.1"/>
    <property type="match status" value="1"/>
</dbReference>
<dbReference type="NCBIfam" id="TIGR02013">
    <property type="entry name" value="rpoB"/>
    <property type="match status" value="1"/>
</dbReference>
<dbReference type="PANTHER" id="PTHR20856">
    <property type="entry name" value="DNA-DIRECTED RNA POLYMERASE I SUBUNIT 2"/>
    <property type="match status" value="1"/>
</dbReference>
<dbReference type="Pfam" id="PF04563">
    <property type="entry name" value="RNA_pol_Rpb2_1"/>
    <property type="match status" value="1"/>
</dbReference>
<dbReference type="Pfam" id="PF04561">
    <property type="entry name" value="RNA_pol_Rpb2_2"/>
    <property type="match status" value="2"/>
</dbReference>
<dbReference type="Pfam" id="PF04565">
    <property type="entry name" value="RNA_pol_Rpb2_3"/>
    <property type="match status" value="1"/>
</dbReference>
<dbReference type="Pfam" id="PF10385">
    <property type="entry name" value="RNA_pol_Rpb2_45"/>
    <property type="match status" value="1"/>
</dbReference>
<dbReference type="Pfam" id="PF00562">
    <property type="entry name" value="RNA_pol_Rpb2_6"/>
    <property type="match status" value="1"/>
</dbReference>
<dbReference type="Pfam" id="PF04560">
    <property type="entry name" value="RNA_pol_Rpb2_7"/>
    <property type="match status" value="1"/>
</dbReference>
<dbReference type="SUPFAM" id="SSF64484">
    <property type="entry name" value="beta and beta-prime subunits of DNA dependent RNA-polymerase"/>
    <property type="match status" value="1"/>
</dbReference>
<dbReference type="PROSITE" id="PS01166">
    <property type="entry name" value="RNA_POL_BETA"/>
    <property type="match status" value="1"/>
</dbReference>
<organism>
    <name type="scientific">Pseudomonas putida (strain W619)</name>
    <dbReference type="NCBI Taxonomy" id="390235"/>
    <lineage>
        <taxon>Bacteria</taxon>
        <taxon>Pseudomonadati</taxon>
        <taxon>Pseudomonadota</taxon>
        <taxon>Gammaproteobacteria</taxon>
        <taxon>Pseudomonadales</taxon>
        <taxon>Pseudomonadaceae</taxon>
        <taxon>Pseudomonas</taxon>
    </lineage>
</organism>
<evidence type="ECO:0000255" key="1">
    <source>
        <dbReference type="HAMAP-Rule" id="MF_01321"/>
    </source>
</evidence>
<accession>B1JDX1</accession>
<comment type="function">
    <text evidence="1">DNA-dependent RNA polymerase catalyzes the transcription of DNA into RNA using the four ribonucleoside triphosphates as substrates.</text>
</comment>
<comment type="catalytic activity">
    <reaction evidence="1">
        <text>RNA(n) + a ribonucleoside 5'-triphosphate = RNA(n+1) + diphosphate</text>
        <dbReference type="Rhea" id="RHEA:21248"/>
        <dbReference type="Rhea" id="RHEA-COMP:14527"/>
        <dbReference type="Rhea" id="RHEA-COMP:17342"/>
        <dbReference type="ChEBI" id="CHEBI:33019"/>
        <dbReference type="ChEBI" id="CHEBI:61557"/>
        <dbReference type="ChEBI" id="CHEBI:140395"/>
        <dbReference type="EC" id="2.7.7.6"/>
    </reaction>
</comment>
<comment type="subunit">
    <text evidence="1">The RNAP catalytic core consists of 2 alpha, 1 beta, 1 beta' and 1 omega subunit. When a sigma factor is associated with the core the holoenzyme is formed, which can initiate transcription.</text>
</comment>
<comment type="similarity">
    <text evidence="1">Belongs to the RNA polymerase beta chain family.</text>
</comment>
<keyword id="KW-0240">DNA-directed RNA polymerase</keyword>
<keyword id="KW-0548">Nucleotidyltransferase</keyword>
<keyword id="KW-0804">Transcription</keyword>
<keyword id="KW-0808">Transferase</keyword>
<protein>
    <recommendedName>
        <fullName evidence="1">DNA-directed RNA polymerase subunit beta</fullName>
        <shortName evidence="1">RNAP subunit beta</shortName>
        <ecNumber evidence="1">2.7.7.6</ecNumber>
    </recommendedName>
    <alternativeName>
        <fullName evidence="1">RNA polymerase subunit beta</fullName>
    </alternativeName>
    <alternativeName>
        <fullName evidence="1">Transcriptase subunit beta</fullName>
    </alternativeName>
</protein>
<name>RPOB_PSEPW</name>
<reference key="1">
    <citation type="submission" date="2008-02" db="EMBL/GenBank/DDBJ databases">
        <title>Complete sequence of Pseudomonas putida W619.</title>
        <authorList>
            <person name="Copeland A."/>
            <person name="Lucas S."/>
            <person name="Lapidus A."/>
            <person name="Barry K."/>
            <person name="Detter J.C."/>
            <person name="Glavina del Rio T."/>
            <person name="Dalin E."/>
            <person name="Tice H."/>
            <person name="Pitluck S."/>
            <person name="Chain P."/>
            <person name="Malfatti S."/>
            <person name="Shin M."/>
            <person name="Vergez L."/>
            <person name="Schmutz J."/>
            <person name="Larimer F."/>
            <person name="Land M."/>
            <person name="Hauser L."/>
            <person name="Kyrpides N."/>
            <person name="Kim E."/>
            <person name="Taghavi S."/>
            <person name="Vangronsveld D."/>
            <person name="van der Lelie D."/>
            <person name="Richardson P."/>
        </authorList>
    </citation>
    <scope>NUCLEOTIDE SEQUENCE [LARGE SCALE GENOMIC DNA]</scope>
    <source>
        <strain>W619</strain>
    </source>
</reference>
<gene>
    <name evidence="1" type="primary">rpoB</name>
    <name type="ordered locus">PputW619_4756</name>
</gene>
<sequence>MAYSYTEKKRIRKDFSKLPDVMDVPYLLAIQLDSYREFLQAGASKDQFRDVGLHAAFKSVFPIISYSGNAALEYVGYRLGEPAFDVKECVLRGVTFAVPLRVKVRLIIFDKESSNKAIKDIKEQEVYMGEIPLMTENGTFVINGTERVIVSQLHRSPGVFFDHDRGKTHSSGKLLYSARIIPYRGSWLDFEFDPKDCVFVRIDRRRKLPASVLLRALGYSTEEVLNTFYTTNVFHISGEKLSLELVPQRLRGEVAVMDIHDETGKVIVEQGRRITARHVNQLEKAGVNQLDVPMEYVLGRTTAKAIVHPATGEIIAECNTELTTELLIKIAKAQVVRIETLYTNDIDCGPFISDTLKIDTTSNQLEALVEIYRMMRPGEPPTKDAAETLFNNLFFSAERYDLSAVGRMKFNRRIGRTEIEGSGVLSKEDIVEVLKTLVDIRNGKGIVDDIDHLGNRRVRCVGEMAENQFRVGLVRVERAVKERLSMAESEGLMPQDLINAKPVAAAVKEFFGSSQLSQFMDQNNPLSEITHKRRVSALGPGGLTRERAGFEVRDVHPTHYGRVCPIETPEGPNIGLINSLAAYARTNQYGFLESPYRVVKEGVVSDDIVFLSAIEEADHVIAQASAAMNDKKQLIDELVAVRHLNEFTVKAPEDVTLMDVSPKQVVSVAASLIPFLEHDDANRALMGSNMQRQAVPTLRADKPLVGTGMERNVARDSGVCVVARRGGVIDSVDASRIVVRVADDEVETGEAGVDIYNLTKYTRSNQNTCINQRPLVSKGDKVARGDIMADGPSTDMGELALGQNMRIAFMAWNGFNFEDSICLSERVVQEDRFTTIHIQELTCVARDTKLGPEEITADIPNVGEAALNKLDEAGIVYVGAEVGAGDILVGKVTPKGETQLTPEEKLLRAIFGEKASDVKDTSLRVPTGTKGTVIDVQVFTRDGVERDSRALAIEKMQLDEIRKDLNEEFRIVEGATFERLRSALNGQVVDGGAGLKKGTVITDEVLDGLEHGQWFKLRMAEDALNEQLEKAQQYIVDRRRLLDDKFEDKKRKLQQGDDLAPGVLKIVKVYLAIRRRIQPGDKMAGRHGNKGVVSVIMPVEDMPHDANGTPVDVVLNPLGVPSRMNVGQILETHLGLAAKGLGEKIDRMIEEQRKAAELRGFLTEIYNEIGGRQENLEEFTDEEILALAHNLKKGVPMATPVFDGAKEREIKAMLKLADLPESGQMVLFDGRTGNKFERPVTVGYMYMLKLNHLVDDKMHARSTGSYSLVTQQPLGGKAQFGGQRFGEMEVWALEAYGAAYTLQEMLTVKSDDVNGRTKMYKNIVDGDHRMEPGMPESFNVLIKEIRSLGIDIDLETE</sequence>
<proteinExistence type="inferred from homology"/>